<feature type="chain" id="PRO_0000050184" description="Paired box protein Pax-5">
    <location>
        <begin position="1"/>
        <end position="391"/>
    </location>
</feature>
<feature type="DNA-binding region" description="Paired" evidence="2">
    <location>
        <begin position="16"/>
        <end position="142"/>
    </location>
</feature>
<feature type="region of interest" description="PAI subdomain" evidence="2">
    <location>
        <begin position="19"/>
        <end position="75"/>
    </location>
</feature>
<feature type="region of interest" description="RED subdomain" evidence="2">
    <location>
        <begin position="94"/>
        <end position="142"/>
    </location>
</feature>
<feature type="region of interest" description="Disordered" evidence="3">
    <location>
        <begin position="182"/>
        <end position="218"/>
    </location>
</feature>
<comment type="function">
    <text evidence="1 6 7">Transcription factor that plays an essential role in commitment of lymphoid progenitors to the B-lymphocyte lineage (PubMed:9042861). Fulfills a dual role by repressing B-lineage inappropriate genes and simultaneously activating B-lineage-specific genes (PubMed:16546096). In turn, regulates cell adhesion and migration, induces V(H)-to-D(H)J(H) recombination, facilitates pre-B-cell receptor signaling and promotes development to the mature B-cell stage (PubMed:16546096, PubMed:9042861). Repression of the cohesin-release factor WAPL causes global changes of the chromosomal architecture in pro-B cells to facilitate the generation of a diverse antibody repertoire (By similarity).</text>
</comment>
<comment type="subunit">
    <text evidence="1 4">Interacts with ETS1; this interaction alters PAX5 DNA-binding properties. Binds DNA as a monomer. Interacts with TBP; this interaction allows PAX5 to interact with the basal transcription machinery. Interacts with RB1. Interacts with TLE4 (By similarity). Interacts with DAXX (PubMed:11799127).</text>
</comment>
<comment type="interaction">
    <interactant intactId="EBI-296260">
        <id>Q02650</id>
    </interactant>
    <interactant intactId="EBI-1395317">
        <id>Q6NZQ4</id>
        <label>Paxip1</label>
    </interactant>
    <organismsDiffer>false</organismsDiffer>
    <experiments>3</experiments>
</comment>
<comment type="interaction">
    <interactant intactId="EBI-296260">
        <id>Q02650</id>
    </interactant>
    <interactant intactId="EBI-77321">
        <id>Q9UER7</id>
        <label>DAXX</label>
    </interactant>
    <organismsDiffer>true</organismsDiffer>
    <experiments>4</experiments>
</comment>
<comment type="subcellular location">
    <subcellularLocation>
        <location evidence="1">Nucleus</location>
    </subcellularLocation>
</comment>
<comment type="tissue specificity">
    <text evidence="5">Expressed in all B-lymphoid organs, in the embryonic midbrain and in adult testis.</text>
</comment>
<comment type="PTM">
    <text evidence="8">O-glycosylated.</text>
</comment>
<comment type="PTM">
    <text evidence="1">Phosphorylated by SYK. This phosphorylation plays an important role in the abolition of BLIMP1 repression by PAX5 in order to trigger plasma cell differentiation.</text>
</comment>
<comment type="disruption phenotype">
    <text evidence="7">Mutant mice fail to produce small pre-B, B, and plasma cells and therefore lack any immunoglobulin in their serum owing to a complete arrest of B-cell development at an early stage.</text>
</comment>
<sequence length="391" mass="42231">MDLEKNYPTPRTIRTGHGGVNQLGGVFVNGRPLPDVVRQRIVELAHQGVRPCDISRQLRVSHGCVSKILGRYYETGSIKPGVIGGSKPKVATPKVVEKIAEYKRQNPTMFAWEIRDRLLAERVCDNDTVPSVSSINRIIRTKVQQPPNQPVPASSHSIVSTGSVTQVSSVSTDSAGSSYSISGILGITSPSADTNKRKRDEGIQESPVPNGHSLPGRDFLRKQMRGDLFTQQQLEVLDRVFERQHYSDIFTTTEPIKPEQTTEYSAMASLAGGLDDMKANLTSPTPADIGSSVPGPQSYPIVTGRDLASTTLPGYPPHVPPAGQGSYSAPTLTGMVPGSEFSGSPYSHPQYSSYNDSWRFPNPGLLGSPYYYSPAARGAAPPAAATAYDRH</sequence>
<keyword id="KW-0217">Developmental protein</keyword>
<keyword id="KW-0221">Differentiation</keyword>
<keyword id="KW-0903">Direct protein sequencing</keyword>
<keyword id="KW-0238">DNA-binding</keyword>
<keyword id="KW-0325">Glycoprotein</keyword>
<keyword id="KW-0524">Neurogenesis</keyword>
<keyword id="KW-0539">Nucleus</keyword>
<keyword id="KW-0563">Paired box</keyword>
<keyword id="KW-1185">Reference proteome</keyword>
<keyword id="KW-0744">Spermatogenesis</keyword>
<keyword id="KW-0804">Transcription</keyword>
<keyword id="KW-0805">Transcription regulation</keyword>
<protein>
    <recommendedName>
        <fullName>Paired box protein Pax-5</fullName>
    </recommendedName>
    <alternativeName>
        <fullName>B-cell-specific transcription factor</fullName>
        <shortName>BSAP</shortName>
    </alternativeName>
</protein>
<evidence type="ECO:0000250" key="1">
    <source>
        <dbReference type="UniProtKB" id="Q02548"/>
    </source>
</evidence>
<evidence type="ECO:0000255" key="2">
    <source>
        <dbReference type="PROSITE-ProRule" id="PRU00381"/>
    </source>
</evidence>
<evidence type="ECO:0000256" key="3">
    <source>
        <dbReference type="SAM" id="MobiDB-lite"/>
    </source>
</evidence>
<evidence type="ECO:0000269" key="4">
    <source>
    </source>
</evidence>
<evidence type="ECO:0000269" key="5">
    <source>
    </source>
</evidence>
<evidence type="ECO:0000269" key="6">
    <source>
    </source>
</evidence>
<evidence type="ECO:0000269" key="7">
    <source>
    </source>
</evidence>
<evidence type="ECO:0000305" key="8"/>
<proteinExistence type="evidence at protein level"/>
<dbReference type="EMBL" id="M97013">
    <property type="protein sequence ID" value="AAA37325.1"/>
    <property type="molecule type" value="mRNA"/>
</dbReference>
<dbReference type="CCDS" id="CCDS18125.1"/>
<dbReference type="PIR" id="B41061">
    <property type="entry name" value="B41061"/>
</dbReference>
<dbReference type="RefSeq" id="NP_032808.1">
    <property type="nucleotide sequence ID" value="NM_008782.3"/>
</dbReference>
<dbReference type="SMR" id="Q02650"/>
<dbReference type="BioGRID" id="202032">
    <property type="interactions" value="4"/>
</dbReference>
<dbReference type="FunCoup" id="Q02650">
    <property type="interactions" value="546"/>
</dbReference>
<dbReference type="IntAct" id="Q02650">
    <property type="interactions" value="9"/>
</dbReference>
<dbReference type="MINT" id="Q02650"/>
<dbReference type="STRING" id="10090.ENSMUSP00000014174"/>
<dbReference type="GlyGen" id="Q02650">
    <property type="glycosylation" value="1 site"/>
</dbReference>
<dbReference type="iPTMnet" id="Q02650"/>
<dbReference type="PhosphoSitePlus" id="Q02650"/>
<dbReference type="PaxDb" id="10090-ENSMUSP00000014174"/>
<dbReference type="ProteomicsDB" id="294020"/>
<dbReference type="Antibodypedia" id="3668">
    <property type="antibodies" value="1039 antibodies from 48 providers"/>
</dbReference>
<dbReference type="DNASU" id="18507"/>
<dbReference type="Ensembl" id="ENSMUST00000014174.14">
    <property type="protein sequence ID" value="ENSMUSP00000014174.8"/>
    <property type="gene ID" value="ENSMUSG00000014030.16"/>
</dbReference>
<dbReference type="GeneID" id="18507"/>
<dbReference type="KEGG" id="mmu:18507"/>
<dbReference type="UCSC" id="uc008srx.1">
    <property type="organism name" value="mouse"/>
</dbReference>
<dbReference type="AGR" id="MGI:97489"/>
<dbReference type="CTD" id="5079"/>
<dbReference type="MGI" id="MGI:97489">
    <property type="gene designation" value="Pax5"/>
</dbReference>
<dbReference type="VEuPathDB" id="HostDB:ENSMUSG00000014030"/>
<dbReference type="eggNOG" id="KOG3862">
    <property type="taxonomic scope" value="Eukaryota"/>
</dbReference>
<dbReference type="GeneTree" id="ENSGT00940000159636"/>
<dbReference type="InParanoid" id="Q02650"/>
<dbReference type="OMA" id="IXIQESP"/>
<dbReference type="OrthoDB" id="3225452at2759"/>
<dbReference type="PhylomeDB" id="Q02650"/>
<dbReference type="TreeFam" id="TF315397"/>
<dbReference type="Reactome" id="R-MMU-8939245">
    <property type="pathway name" value="RUNX1 regulates transcription of genes involved in BCR signaling"/>
</dbReference>
<dbReference type="BioGRID-ORCS" id="18507">
    <property type="hits" value="1 hit in 80 CRISPR screens"/>
</dbReference>
<dbReference type="PRO" id="PR:Q02650"/>
<dbReference type="Proteomes" id="UP000000589">
    <property type="component" value="Chromosome 4"/>
</dbReference>
<dbReference type="RNAct" id="Q02650">
    <property type="molecule type" value="protein"/>
</dbReference>
<dbReference type="Bgee" id="ENSMUSG00000014030">
    <property type="expression patterns" value="Expressed in peripheral lymph node and 97 other cell types or tissues"/>
</dbReference>
<dbReference type="ExpressionAtlas" id="Q02650">
    <property type="expression patterns" value="baseline and differential"/>
</dbReference>
<dbReference type="GO" id="GO:0005654">
    <property type="term" value="C:nucleoplasm"/>
    <property type="evidence" value="ECO:0007669"/>
    <property type="project" value="Ensembl"/>
</dbReference>
<dbReference type="GO" id="GO:0005634">
    <property type="term" value="C:nucleus"/>
    <property type="evidence" value="ECO:0000314"/>
    <property type="project" value="MGI"/>
</dbReference>
<dbReference type="GO" id="GO:0005667">
    <property type="term" value="C:transcription regulator complex"/>
    <property type="evidence" value="ECO:0000304"/>
    <property type="project" value="MGI"/>
</dbReference>
<dbReference type="GO" id="GO:0003677">
    <property type="term" value="F:DNA binding"/>
    <property type="evidence" value="ECO:0000314"/>
    <property type="project" value="MGI"/>
</dbReference>
<dbReference type="GO" id="GO:0001228">
    <property type="term" value="F:DNA-binding transcription activator activity, RNA polymerase II-specific"/>
    <property type="evidence" value="ECO:0000314"/>
    <property type="project" value="NTNU_SB"/>
</dbReference>
<dbReference type="GO" id="GO:0003700">
    <property type="term" value="F:DNA-binding transcription factor activity"/>
    <property type="evidence" value="ECO:0000314"/>
    <property type="project" value="MGI"/>
</dbReference>
<dbReference type="GO" id="GO:0000978">
    <property type="term" value="F:RNA polymerase II cis-regulatory region sequence-specific DNA binding"/>
    <property type="evidence" value="ECO:0000314"/>
    <property type="project" value="NTNU_SB"/>
</dbReference>
<dbReference type="GO" id="GO:0030534">
    <property type="term" value="P:adult behavior"/>
    <property type="evidence" value="ECO:0000315"/>
    <property type="project" value="MGI"/>
</dbReference>
<dbReference type="GO" id="GO:0009887">
    <property type="term" value="P:animal organ morphogenesis"/>
    <property type="evidence" value="ECO:0000304"/>
    <property type="project" value="MGI"/>
</dbReference>
<dbReference type="GO" id="GO:0021987">
    <property type="term" value="P:cerebral cortex development"/>
    <property type="evidence" value="ECO:0000315"/>
    <property type="project" value="MGI"/>
</dbReference>
<dbReference type="GO" id="GO:0071542">
    <property type="term" value="P:dopaminergic neuron differentiation"/>
    <property type="evidence" value="ECO:0000304"/>
    <property type="project" value="ParkinsonsUK-UCL"/>
</dbReference>
<dbReference type="GO" id="GO:0048701">
    <property type="term" value="P:embryonic cranial skeleton morphogenesis"/>
    <property type="evidence" value="ECO:0000315"/>
    <property type="project" value="MGI"/>
</dbReference>
<dbReference type="GO" id="GO:0021670">
    <property type="term" value="P:lateral ventricle development"/>
    <property type="evidence" value="ECO:0000315"/>
    <property type="project" value="MGI"/>
</dbReference>
<dbReference type="GO" id="GO:0045892">
    <property type="term" value="P:negative regulation of DNA-templated transcription"/>
    <property type="evidence" value="ECO:0000304"/>
    <property type="project" value="UniProtKB"/>
</dbReference>
<dbReference type="GO" id="GO:0000122">
    <property type="term" value="P:negative regulation of transcription by RNA polymerase II"/>
    <property type="evidence" value="ECO:0000314"/>
    <property type="project" value="MGI"/>
</dbReference>
<dbReference type="GO" id="GO:0045893">
    <property type="term" value="P:positive regulation of DNA-templated transcription"/>
    <property type="evidence" value="ECO:0000304"/>
    <property type="project" value="UniProtKB"/>
</dbReference>
<dbReference type="GO" id="GO:0045944">
    <property type="term" value="P:positive regulation of transcription by RNA polymerase II"/>
    <property type="evidence" value="ECO:0000314"/>
    <property type="project" value="NTNU_SB"/>
</dbReference>
<dbReference type="GO" id="GO:0006355">
    <property type="term" value="P:regulation of DNA-templated transcription"/>
    <property type="evidence" value="ECO:0000314"/>
    <property type="project" value="MGI"/>
</dbReference>
<dbReference type="GO" id="GO:0035914">
    <property type="term" value="P:skeletal muscle cell differentiation"/>
    <property type="evidence" value="ECO:0000315"/>
    <property type="project" value="MGI"/>
</dbReference>
<dbReference type="GO" id="GO:0007283">
    <property type="term" value="P:spermatogenesis"/>
    <property type="evidence" value="ECO:0007669"/>
    <property type="project" value="UniProtKB-KW"/>
</dbReference>
<dbReference type="CDD" id="cd00131">
    <property type="entry name" value="PAX"/>
    <property type="match status" value="1"/>
</dbReference>
<dbReference type="FunFam" id="1.10.10.10:FF:000013">
    <property type="entry name" value="Paired box 8 isoform 1"/>
    <property type="match status" value="1"/>
</dbReference>
<dbReference type="FunFam" id="1.10.10.10:FF:000003">
    <property type="entry name" value="Paired box protein Pax-6"/>
    <property type="match status" value="1"/>
</dbReference>
<dbReference type="Gene3D" id="1.10.10.10">
    <property type="entry name" value="Winged helix-like DNA-binding domain superfamily/Winged helix DNA-binding domain"/>
    <property type="match status" value="2"/>
</dbReference>
<dbReference type="InterPro" id="IPR009057">
    <property type="entry name" value="Homeodomain-like_sf"/>
</dbReference>
<dbReference type="InterPro" id="IPR043182">
    <property type="entry name" value="PAIRED_DNA-bd_dom"/>
</dbReference>
<dbReference type="InterPro" id="IPR001523">
    <property type="entry name" value="Paired_dom"/>
</dbReference>
<dbReference type="InterPro" id="IPR022130">
    <property type="entry name" value="Pax2_C"/>
</dbReference>
<dbReference type="InterPro" id="IPR043565">
    <property type="entry name" value="PAX_fam"/>
</dbReference>
<dbReference type="InterPro" id="IPR036388">
    <property type="entry name" value="WH-like_DNA-bd_sf"/>
</dbReference>
<dbReference type="PANTHER" id="PTHR45636:SF20">
    <property type="entry name" value="PAIRED BOX PROTEIN PAX-5"/>
    <property type="match status" value="1"/>
</dbReference>
<dbReference type="PANTHER" id="PTHR45636">
    <property type="entry name" value="PAIRED BOX PROTEIN PAX-6-RELATED-RELATED"/>
    <property type="match status" value="1"/>
</dbReference>
<dbReference type="Pfam" id="PF00292">
    <property type="entry name" value="PAX"/>
    <property type="match status" value="1"/>
</dbReference>
<dbReference type="Pfam" id="PF12403">
    <property type="entry name" value="Pax2_C"/>
    <property type="match status" value="1"/>
</dbReference>
<dbReference type="PRINTS" id="PR00027">
    <property type="entry name" value="PAIREDBOX"/>
</dbReference>
<dbReference type="SMART" id="SM00351">
    <property type="entry name" value="PAX"/>
    <property type="match status" value="1"/>
</dbReference>
<dbReference type="SUPFAM" id="SSF46689">
    <property type="entry name" value="Homeodomain-like"/>
    <property type="match status" value="1"/>
</dbReference>
<dbReference type="PROSITE" id="PS00034">
    <property type="entry name" value="PAIRED_1"/>
    <property type="match status" value="1"/>
</dbReference>
<dbReference type="PROSITE" id="PS51057">
    <property type="entry name" value="PAIRED_2"/>
    <property type="match status" value="1"/>
</dbReference>
<name>PAX5_MOUSE</name>
<accession>Q02650</accession>
<gene>
    <name type="primary">Pax5</name>
    <name type="synonym">Pax-5</name>
</gene>
<reference key="1">
    <citation type="journal article" date="1992" name="Genes Dev.">
        <title>Pax-5 encodes the transcription factor BSAP and is expressed in B lymphocytes, the developing CNS, and adult testis.</title>
        <authorList>
            <person name="Adams B."/>
            <person name="Doerfler P."/>
            <person name="Aguzzi A."/>
            <person name="Kozmik Z."/>
            <person name="Urbanek P."/>
            <person name="Maurer-Fogy I."/>
            <person name="Busslinger M."/>
        </authorList>
    </citation>
    <scope>NUCLEOTIDE SEQUENCE [MRNA]</scope>
    <scope>PARTIAL PROTEIN SEQUENCE</scope>
    <scope>TISSUE SPECIFICITY</scope>
</reference>
<reference key="2">
    <citation type="journal article" date="1991" name="Genomics">
        <title>Pax: a murine multigene family of paired box-containing genes.</title>
        <authorList>
            <person name="Walther C."/>
            <person name="Guenet J.-L."/>
            <person name="Simon D."/>
            <person name="Deutsch U."/>
            <person name="Jostes B."/>
            <person name="Goulding M.D."/>
            <person name="Plachov D."/>
            <person name="Balling R."/>
            <person name="Gruss P."/>
        </authorList>
    </citation>
    <scope>NUCLEOTIDE SEQUENCE [MRNA] OF 17-136</scope>
</reference>
<reference key="3">
    <citation type="journal article" date="1997" name="Genes Dev.">
        <title>Essential functions of Pax5 (BSAP) in pro-B cell development: difference between fetal and adult B lymphopoiesis and reduced V-to-DJ recombination at the IgH locus.</title>
        <authorList>
            <person name="Nutt S.L."/>
            <person name="Urbanek P."/>
            <person name="Rolink A."/>
            <person name="Busslinger M."/>
        </authorList>
    </citation>
    <scope>FUNCTION</scope>
    <scope>DISRUPTION PHENOTYPE</scope>
</reference>
<reference key="4">
    <citation type="journal article" date="2002" name="J. Biol. Chem.">
        <title>The interaction of Pax5 (BSAP) with Daxx can result in transcriptional activation in B cells.</title>
        <authorList>
            <person name="Emelyanov A.V."/>
            <person name="Kovac C.R."/>
            <person name="Sepulveda M.A."/>
            <person name="Birshtein B.K."/>
        </authorList>
    </citation>
    <scope>INTERACTION WITH DAXX</scope>
</reference>
<reference key="5">
    <citation type="journal article" date="2006" name="Immunity">
        <title>Gene repression by Pax5 in B cells is essential for blood cell homeostasis and is reversed in plasma cells.</title>
        <authorList>
            <person name="Delogu A."/>
            <person name="Schebesta A."/>
            <person name="Sun Q."/>
            <person name="Aschenbrenner K."/>
            <person name="Perlot T."/>
            <person name="Busslinger M."/>
        </authorList>
    </citation>
    <scope>FUNCTION</scope>
</reference>
<organism>
    <name type="scientific">Mus musculus</name>
    <name type="common">Mouse</name>
    <dbReference type="NCBI Taxonomy" id="10090"/>
    <lineage>
        <taxon>Eukaryota</taxon>
        <taxon>Metazoa</taxon>
        <taxon>Chordata</taxon>
        <taxon>Craniata</taxon>
        <taxon>Vertebrata</taxon>
        <taxon>Euteleostomi</taxon>
        <taxon>Mammalia</taxon>
        <taxon>Eutheria</taxon>
        <taxon>Euarchontoglires</taxon>
        <taxon>Glires</taxon>
        <taxon>Rodentia</taxon>
        <taxon>Myomorpha</taxon>
        <taxon>Muroidea</taxon>
        <taxon>Muridae</taxon>
        <taxon>Murinae</taxon>
        <taxon>Mus</taxon>
        <taxon>Mus</taxon>
    </lineage>
</organism>